<name>CYB_CANCA</name>
<sequence>MPHQQMLILFGLLPVATNISTWWNFGSMLLTCSALQVMTGFFLSMHYTANINLAFSSIIHITRDVPHGWMMQNLHAIGASMFFICIYMHIARGLYYGSYLNKETWLSGTTLLIMLMATAFFGYVLPWGQMSFWAATVITNLLTAVPYLGTTMTTWLWGGFAINDPTLTRFFALHFILPFGIISMSSVHIMLLHEDGSANPLGTNSDIDKIPFHPYHTYKDLLVISMMIITVLLTVSFFPDIMNDPENFSKANPLVTPQHIKPEWYFLFAYGILRSIPNKLGGALALVMSIMILLTMPFTHTSTLRSMTFRPLMQFMFWTLVATFTVITWTATKPVEPPFTTISQVASIIYFMFFMSNPILGWMENKITKHN</sequence>
<keyword id="KW-0249">Electron transport</keyword>
<keyword id="KW-0349">Heme</keyword>
<keyword id="KW-0408">Iron</keyword>
<keyword id="KW-0472">Membrane</keyword>
<keyword id="KW-0479">Metal-binding</keyword>
<keyword id="KW-0496">Mitochondrion</keyword>
<keyword id="KW-0999">Mitochondrion inner membrane</keyword>
<keyword id="KW-0679">Respiratory chain</keyword>
<keyword id="KW-0812">Transmembrane</keyword>
<keyword id="KW-1133">Transmembrane helix</keyword>
<keyword id="KW-0813">Transport</keyword>
<keyword id="KW-0830">Ubiquinone</keyword>
<accession>O48025</accession>
<accession>O48026</accession>
<reference key="1">
    <citation type="thesis" date="1997" institute="Queen's University / Kingston" country="Canada">
        <title>Hic Sunt Serpentes -- molecular phylogenetics and the Boidae (Serpentes: Booidea).</title>
        <authorList>
            <person name="Campbell B.N."/>
        </authorList>
    </citation>
    <scope>NUCLEOTIDE SEQUENCE [GENOMIC DNA]</scope>
</reference>
<gene>
    <name type="primary">MT-CYB</name>
    <name type="synonym">COB</name>
    <name type="synonym">CYTB</name>
    <name type="synonym">MTCYB</name>
</gene>
<protein>
    <recommendedName>
        <fullName>Cytochrome b</fullName>
    </recommendedName>
    <alternativeName>
        <fullName>Complex III subunit 3</fullName>
    </alternativeName>
    <alternativeName>
        <fullName>Complex III subunit III</fullName>
    </alternativeName>
    <alternativeName>
        <fullName>Cytochrome b-c1 complex subunit 3</fullName>
    </alternativeName>
    <alternativeName>
        <fullName>Ubiquinol-cytochrome-c reductase complex cytochrome b subunit</fullName>
    </alternativeName>
</protein>
<evidence type="ECO:0000250" key="1"/>
<evidence type="ECO:0000250" key="2">
    <source>
        <dbReference type="UniProtKB" id="P00157"/>
    </source>
</evidence>
<evidence type="ECO:0000255" key="3">
    <source>
        <dbReference type="PROSITE-ProRule" id="PRU00967"/>
    </source>
</evidence>
<evidence type="ECO:0000255" key="4">
    <source>
        <dbReference type="PROSITE-ProRule" id="PRU00968"/>
    </source>
</evidence>
<dbReference type="EMBL" id="U69753">
    <property type="protein sequence ID" value="AAC01792.1"/>
    <property type="molecule type" value="Genomic_DNA"/>
</dbReference>
<dbReference type="EMBL" id="U69754">
    <property type="protein sequence ID" value="AAC01793.1"/>
    <property type="molecule type" value="Genomic_DNA"/>
</dbReference>
<dbReference type="SMR" id="O48025"/>
<dbReference type="GO" id="GO:0005743">
    <property type="term" value="C:mitochondrial inner membrane"/>
    <property type="evidence" value="ECO:0007669"/>
    <property type="project" value="UniProtKB-SubCell"/>
</dbReference>
<dbReference type="GO" id="GO:0045275">
    <property type="term" value="C:respiratory chain complex III"/>
    <property type="evidence" value="ECO:0007669"/>
    <property type="project" value="InterPro"/>
</dbReference>
<dbReference type="GO" id="GO:0046872">
    <property type="term" value="F:metal ion binding"/>
    <property type="evidence" value="ECO:0007669"/>
    <property type="project" value="UniProtKB-KW"/>
</dbReference>
<dbReference type="GO" id="GO:0008121">
    <property type="term" value="F:ubiquinol-cytochrome-c reductase activity"/>
    <property type="evidence" value="ECO:0007669"/>
    <property type="project" value="InterPro"/>
</dbReference>
<dbReference type="GO" id="GO:0006122">
    <property type="term" value="P:mitochondrial electron transport, ubiquinol to cytochrome c"/>
    <property type="evidence" value="ECO:0007669"/>
    <property type="project" value="TreeGrafter"/>
</dbReference>
<dbReference type="CDD" id="cd00290">
    <property type="entry name" value="cytochrome_b_C"/>
    <property type="match status" value="1"/>
</dbReference>
<dbReference type="CDD" id="cd00284">
    <property type="entry name" value="Cytochrome_b_N"/>
    <property type="match status" value="1"/>
</dbReference>
<dbReference type="Gene3D" id="1.20.810.10">
    <property type="entry name" value="Cytochrome Bc1 Complex, Chain C"/>
    <property type="match status" value="1"/>
</dbReference>
<dbReference type="InterPro" id="IPR005798">
    <property type="entry name" value="Cyt_b/b6_C"/>
</dbReference>
<dbReference type="InterPro" id="IPR036150">
    <property type="entry name" value="Cyt_b/b6_C_sf"/>
</dbReference>
<dbReference type="InterPro" id="IPR005797">
    <property type="entry name" value="Cyt_b/b6_N"/>
</dbReference>
<dbReference type="InterPro" id="IPR027387">
    <property type="entry name" value="Cytb/b6-like_sf"/>
</dbReference>
<dbReference type="InterPro" id="IPR030689">
    <property type="entry name" value="Cytochrome_b"/>
</dbReference>
<dbReference type="InterPro" id="IPR048260">
    <property type="entry name" value="Cytochrome_b_C_euk/bac"/>
</dbReference>
<dbReference type="InterPro" id="IPR048259">
    <property type="entry name" value="Cytochrome_b_N_euk/bac"/>
</dbReference>
<dbReference type="InterPro" id="IPR016174">
    <property type="entry name" value="Di-haem_cyt_TM"/>
</dbReference>
<dbReference type="PANTHER" id="PTHR19271">
    <property type="entry name" value="CYTOCHROME B"/>
    <property type="match status" value="1"/>
</dbReference>
<dbReference type="PANTHER" id="PTHR19271:SF16">
    <property type="entry name" value="CYTOCHROME B"/>
    <property type="match status" value="1"/>
</dbReference>
<dbReference type="Pfam" id="PF00032">
    <property type="entry name" value="Cytochrom_B_C"/>
    <property type="match status" value="1"/>
</dbReference>
<dbReference type="Pfam" id="PF00033">
    <property type="entry name" value="Cytochrome_B"/>
    <property type="match status" value="1"/>
</dbReference>
<dbReference type="PIRSF" id="PIRSF038885">
    <property type="entry name" value="COB"/>
    <property type="match status" value="1"/>
</dbReference>
<dbReference type="SUPFAM" id="SSF81648">
    <property type="entry name" value="a domain/subunit of cytochrome bc1 complex (Ubiquinol-cytochrome c reductase)"/>
    <property type="match status" value="1"/>
</dbReference>
<dbReference type="SUPFAM" id="SSF81342">
    <property type="entry name" value="Transmembrane di-heme cytochromes"/>
    <property type="match status" value="1"/>
</dbReference>
<dbReference type="PROSITE" id="PS51003">
    <property type="entry name" value="CYTB_CTER"/>
    <property type="match status" value="1"/>
</dbReference>
<dbReference type="PROSITE" id="PS51002">
    <property type="entry name" value="CYTB_NTER"/>
    <property type="match status" value="1"/>
</dbReference>
<proteinExistence type="inferred from homology"/>
<comment type="function">
    <text evidence="2">Component of the ubiquinol-cytochrome c reductase complex (complex III or cytochrome b-c1 complex) that is part of the mitochondrial respiratory chain. The b-c1 complex mediates electron transfer from ubiquinol to cytochrome c. Contributes to the generation of a proton gradient across the mitochondrial membrane that is then used for ATP synthesis.</text>
</comment>
<comment type="cofactor">
    <cofactor evidence="2">
        <name>heme b</name>
        <dbReference type="ChEBI" id="CHEBI:60344"/>
    </cofactor>
    <text evidence="2">Binds 2 heme b groups non-covalently.</text>
</comment>
<comment type="subunit">
    <text evidence="2">The cytochrome bc1 complex contains 3 respiratory subunits (MT-CYB, CYC1 and UQCRFS1), 2 core proteins (UQCRC1 and UQCRC2) and probably 6 low-molecular weight proteins.</text>
</comment>
<comment type="subcellular location">
    <subcellularLocation>
        <location evidence="2">Mitochondrion inner membrane</location>
        <topology evidence="2">Multi-pass membrane protein</topology>
    </subcellularLocation>
</comment>
<comment type="miscellaneous">
    <text evidence="1">Heme 1 (or BL or b562) is low-potential and absorbs at about 562 nm, and heme 2 (or BH or b566) is high-potential and absorbs at about 566 nm.</text>
</comment>
<comment type="similarity">
    <text evidence="3 4">Belongs to the cytochrome b family.</text>
</comment>
<comment type="caution">
    <text evidence="2">The full-length protein contains only eight transmembrane helices, not nine as predicted by bioinformatics tools.</text>
</comment>
<geneLocation type="mitochondrion"/>
<organism>
    <name type="scientific">Candoia carinata</name>
    <name type="common">Papuan tree boa</name>
    <dbReference type="NCBI Taxonomy" id="51854"/>
    <lineage>
        <taxon>Eukaryota</taxon>
        <taxon>Metazoa</taxon>
        <taxon>Chordata</taxon>
        <taxon>Craniata</taxon>
        <taxon>Vertebrata</taxon>
        <taxon>Euteleostomi</taxon>
        <taxon>Lepidosauria</taxon>
        <taxon>Squamata</taxon>
        <taxon>Bifurcata</taxon>
        <taxon>Unidentata</taxon>
        <taxon>Episquamata</taxon>
        <taxon>Toxicofera</taxon>
        <taxon>Serpentes</taxon>
        <taxon>Henophidia</taxon>
        <taxon>Boidae</taxon>
        <taxon>Boinae</taxon>
        <taxon>Candoia</taxon>
    </lineage>
</organism>
<feature type="chain" id="PRO_0000060715" description="Cytochrome b">
    <location>
        <begin position="1"/>
        <end position="371"/>
    </location>
</feature>
<feature type="transmembrane region" description="Helical" evidence="2">
    <location>
        <begin position="25"/>
        <end position="45"/>
    </location>
</feature>
<feature type="transmembrane region" description="Helical" evidence="2">
    <location>
        <begin position="69"/>
        <end position="90"/>
    </location>
</feature>
<feature type="transmembrane region" description="Helical" evidence="2">
    <location>
        <begin position="105"/>
        <end position="125"/>
    </location>
</feature>
<feature type="transmembrane region" description="Helical" evidence="2">
    <location>
        <begin position="170"/>
        <end position="190"/>
    </location>
</feature>
<feature type="transmembrane region" description="Helical" evidence="2">
    <location>
        <begin position="218"/>
        <end position="238"/>
    </location>
</feature>
<feature type="transmembrane region" description="Helical" evidence="2">
    <location>
        <begin position="280"/>
        <end position="300"/>
    </location>
</feature>
<feature type="transmembrane region" description="Helical" evidence="2">
    <location>
        <begin position="312"/>
        <end position="332"/>
    </location>
</feature>
<feature type="transmembrane region" description="Helical" evidence="2">
    <location>
        <begin position="339"/>
        <end position="358"/>
    </location>
</feature>
<feature type="binding site" description="axial binding residue" evidence="2">
    <location>
        <position position="75"/>
    </location>
    <ligand>
        <name>heme b</name>
        <dbReference type="ChEBI" id="CHEBI:60344"/>
        <label>b562</label>
    </ligand>
    <ligandPart>
        <name>Fe</name>
        <dbReference type="ChEBI" id="CHEBI:18248"/>
    </ligandPart>
</feature>
<feature type="binding site" description="axial binding residue" evidence="2">
    <location>
        <position position="89"/>
    </location>
    <ligand>
        <name>heme b</name>
        <dbReference type="ChEBI" id="CHEBI:60344"/>
        <label>b566</label>
    </ligand>
    <ligandPart>
        <name>Fe</name>
        <dbReference type="ChEBI" id="CHEBI:18248"/>
    </ligandPart>
</feature>
<feature type="binding site" description="axial binding residue" evidence="2">
    <location>
        <position position="174"/>
    </location>
    <ligand>
        <name>heme b</name>
        <dbReference type="ChEBI" id="CHEBI:60344"/>
        <label>b562</label>
    </ligand>
    <ligandPart>
        <name>Fe</name>
        <dbReference type="ChEBI" id="CHEBI:18248"/>
    </ligandPart>
</feature>
<feature type="binding site" description="axial binding residue" evidence="2">
    <location>
        <position position="188"/>
    </location>
    <ligand>
        <name>heme b</name>
        <dbReference type="ChEBI" id="CHEBI:60344"/>
        <label>b566</label>
    </ligand>
    <ligandPart>
        <name>Fe</name>
        <dbReference type="ChEBI" id="CHEBI:18248"/>
    </ligandPart>
</feature>
<feature type="binding site" evidence="2">
    <location>
        <position position="193"/>
    </location>
    <ligand>
        <name>a ubiquinone</name>
        <dbReference type="ChEBI" id="CHEBI:16389"/>
    </ligand>
</feature>
<feature type="sequence variant">
    <original>A</original>
    <variation>G</variation>
    <location>
        <position position="198"/>
    </location>
</feature>
<feature type="sequence variant">
    <original>H</original>
    <variation>Q</variation>
    <location>
        <position position="216"/>
    </location>
</feature>
<feature type="sequence variant">
    <original>I</original>
    <variation>V</variation>
    <location>
        <position position="224"/>
    </location>
</feature>
<feature type="sequence variant">
    <original>F</original>
    <variation>L</variation>
    <location>
        <position position="315"/>
    </location>
</feature>